<dbReference type="PIR" id="A00110">
    <property type="entry name" value="CCSG6"/>
</dbReference>
<dbReference type="PDB" id="1F1F">
    <property type="method" value="X-ray"/>
    <property type="resolution" value="2.70 A"/>
    <property type="chains" value="A=1-89"/>
</dbReference>
<dbReference type="PDB" id="1KIB">
    <property type="method" value="X-ray"/>
    <property type="resolution" value="3.50 A"/>
    <property type="chains" value="A/B/C/D/E/F/G/H=1-89"/>
</dbReference>
<dbReference type="PDBsum" id="1F1F"/>
<dbReference type="PDBsum" id="1KIB"/>
<dbReference type="SMR" id="P00118"/>
<dbReference type="EvolutionaryTrace" id="P00118"/>
<dbReference type="GO" id="GO:0031979">
    <property type="term" value="C:plasma membrane-derived thylakoid lumen"/>
    <property type="evidence" value="ECO:0007669"/>
    <property type="project" value="UniProtKB-SubCell"/>
</dbReference>
<dbReference type="GO" id="GO:0009055">
    <property type="term" value="F:electron transfer activity"/>
    <property type="evidence" value="ECO:0007669"/>
    <property type="project" value="UniProtKB-UniRule"/>
</dbReference>
<dbReference type="GO" id="GO:0020037">
    <property type="term" value="F:heme binding"/>
    <property type="evidence" value="ECO:0007669"/>
    <property type="project" value="InterPro"/>
</dbReference>
<dbReference type="GO" id="GO:0005506">
    <property type="term" value="F:iron ion binding"/>
    <property type="evidence" value="ECO:0007669"/>
    <property type="project" value="InterPro"/>
</dbReference>
<dbReference type="GO" id="GO:0015979">
    <property type="term" value="P:photosynthesis"/>
    <property type="evidence" value="ECO:0007669"/>
    <property type="project" value="UniProtKB-UniRule"/>
</dbReference>
<dbReference type="FunFam" id="1.10.760.10:FF:000038">
    <property type="entry name" value="Cytochrome c6"/>
    <property type="match status" value="1"/>
</dbReference>
<dbReference type="Gene3D" id="1.10.760.10">
    <property type="entry name" value="Cytochrome c-like domain"/>
    <property type="match status" value="1"/>
</dbReference>
<dbReference type="HAMAP" id="MF_00594">
    <property type="entry name" value="Cytc_PetJ"/>
    <property type="match status" value="1"/>
</dbReference>
<dbReference type="InterPro" id="IPR009056">
    <property type="entry name" value="Cyt_c-like_dom"/>
</dbReference>
<dbReference type="InterPro" id="IPR036909">
    <property type="entry name" value="Cyt_c-like_dom_sf"/>
</dbReference>
<dbReference type="InterPro" id="IPR023655">
    <property type="entry name" value="Cyt_C6"/>
</dbReference>
<dbReference type="InterPro" id="IPR008168">
    <property type="entry name" value="Cyt_C_IC"/>
</dbReference>
<dbReference type="PANTHER" id="PTHR34688">
    <property type="entry name" value="CYTOCHROME C6, CHLOROPLASTIC"/>
    <property type="match status" value="1"/>
</dbReference>
<dbReference type="PANTHER" id="PTHR34688:SF2">
    <property type="entry name" value="CYTOCHROME C6, CHLOROPLASTIC"/>
    <property type="match status" value="1"/>
</dbReference>
<dbReference type="Pfam" id="PF13442">
    <property type="entry name" value="Cytochrome_CBB3"/>
    <property type="match status" value="1"/>
</dbReference>
<dbReference type="PRINTS" id="PR00605">
    <property type="entry name" value="CYTCHROMECIC"/>
</dbReference>
<dbReference type="SUPFAM" id="SSF46626">
    <property type="entry name" value="Cytochrome c"/>
    <property type="match status" value="1"/>
</dbReference>
<dbReference type="PROSITE" id="PS51007">
    <property type="entry name" value="CYTC"/>
    <property type="match status" value="1"/>
</dbReference>
<name>CYC6_LIMMA</name>
<comment type="function">
    <text evidence="4">Functions as an electron carrier between membrane-bound cytochrome b6-f and photosystem I in oxygenic photosynthesis.</text>
</comment>
<comment type="biophysicochemical properties">
    <redoxPotential>
        <text>E(0) is +314 mV.</text>
    </redoxPotential>
</comment>
<comment type="subunit">
    <text evidence="1 2">Monomer. Homodimer, or even higher oligomerization, in crystal structures (PubMed:11478889, PubMed:12077429).</text>
</comment>
<comment type="subcellular location">
    <subcellularLocation>
        <location evidence="4">Cellular thylakoid lumen</location>
    </subcellularLocation>
</comment>
<comment type="PTM">
    <text evidence="1 2">Binds 1 heme c group covalently per subunit.</text>
</comment>
<comment type="similarity">
    <text evidence="4">Belongs to the cytochrome c family. PetJ subfamily.</text>
</comment>
<keyword id="KW-0002">3D-structure</keyword>
<keyword id="KW-0903">Direct protein sequencing</keyword>
<keyword id="KW-0249">Electron transport</keyword>
<keyword id="KW-0349">Heme</keyword>
<keyword id="KW-0408">Iron</keyword>
<keyword id="KW-0479">Metal-binding</keyword>
<keyword id="KW-0602">Photosynthesis</keyword>
<keyword id="KW-0793">Thylakoid</keyword>
<keyword id="KW-0813">Transport</keyword>
<accession>P00118</accession>
<evidence type="ECO:0000269" key="1">
    <source>
    </source>
</evidence>
<evidence type="ECO:0000269" key="2">
    <source>
    </source>
</evidence>
<evidence type="ECO:0000303" key="3">
    <source>
    </source>
</evidence>
<evidence type="ECO:0000305" key="4"/>
<evidence type="ECO:0007829" key="5">
    <source>
        <dbReference type="PDB" id="1F1F"/>
    </source>
</evidence>
<reference key="1">
    <citation type="journal article" date="1975" name="Nature">
        <title>Amino acid sequence similarity between cytochrome f from a blue-green bacterium and algal chloroplasts.</title>
        <authorList>
            <person name="Ambler R.P."/>
            <person name="Bartsch R.G."/>
        </authorList>
    </citation>
    <scope>PROTEIN SEQUENCE</scope>
</reference>
<reference key="2">
    <citation type="journal article" date="2001" name="Biochemistry">
        <title>Structures of cytochrome c-549 and cytochrome c6 from the cyanobacterium Arthrospira maxima.</title>
        <authorList>
            <person name="Sawaya M.R."/>
            <person name="Krogmann D.W."/>
            <person name="Serag A."/>
            <person name="Ho K.K."/>
            <person name="Yeates T.O."/>
            <person name="Kerfeld C.A."/>
        </authorList>
    </citation>
    <scope>X-RAY CRYSTALLOGRAPHY (2.7 ANGSTROMS) IN COMPLEX WITH HEME</scope>
    <scope>COFACTOR</scope>
    <scope>SUBUNIT</scope>
</reference>
<reference key="3">
    <citation type="journal article" date="2002" name="Acta Crystallogr. D">
        <title>Structure of cytochrome c6 from Arthrospira maxima: an assembly of 24 subunits in a nearly symmetric shell.</title>
        <authorList>
            <person name="Kerfeld C.A."/>
            <person name="Sawaya M.R."/>
            <person name="Krogmann D.W."/>
            <person name="Yeates T.O."/>
        </authorList>
    </citation>
    <scope>X-RAY CRYSTALLOGRAPHY (3.5 ANGSTROMS) IN COMPLEX WITH HEME</scope>
    <scope>COFACTOR</scope>
    <scope>SUBUNIT</scope>
</reference>
<proteinExistence type="evidence at protein level"/>
<protein>
    <recommendedName>
        <fullName>Cytochrome c6</fullName>
    </recommendedName>
    <alternativeName>
        <fullName>Cytochrome c-553</fullName>
    </alternativeName>
    <alternativeName>
        <fullName>Cytochrome c553</fullName>
    </alternativeName>
    <alternativeName>
        <fullName evidence="3">Soluble cytochrome f</fullName>
    </alternativeName>
</protein>
<organism>
    <name type="scientific">Limnospira maxima</name>
    <name type="common">Arthrospira maxima</name>
    <dbReference type="NCBI Taxonomy" id="129910"/>
    <lineage>
        <taxon>Bacteria</taxon>
        <taxon>Bacillati</taxon>
        <taxon>Cyanobacteriota</taxon>
        <taxon>Cyanophyceae</taxon>
        <taxon>Oscillatoriophycideae</taxon>
        <taxon>Oscillatoriales</taxon>
        <taxon>Sirenicapillariaceae</taxon>
        <taxon>Limnospira</taxon>
    </lineage>
</organism>
<gene>
    <name type="primary">petJ</name>
</gene>
<sequence length="89" mass="9236">GDVAAGASVFSANCAACHMGGRNVIVANKTLSKSDLAKYLKGFDDDAVAAVAYQVTNGKNAMPGFNGRLSPKQIEDVAAYVVDQAEKGW</sequence>
<feature type="chain" id="PRO_0000208686" description="Cytochrome c6">
    <location>
        <begin position="1"/>
        <end position="89"/>
    </location>
</feature>
<feature type="binding site" description="covalent" evidence="1 2">
    <location>
        <position position="14"/>
    </location>
    <ligand>
        <name>heme c</name>
        <dbReference type="ChEBI" id="CHEBI:61717"/>
    </ligand>
</feature>
<feature type="binding site" description="covalent" evidence="1 2">
    <location>
        <position position="17"/>
    </location>
    <ligand>
        <name>heme c</name>
        <dbReference type="ChEBI" id="CHEBI:61717"/>
    </ligand>
</feature>
<feature type="binding site" description="axial binding residue" evidence="1 2">
    <location>
        <position position="18"/>
    </location>
    <ligand>
        <name>heme c</name>
        <dbReference type="ChEBI" id="CHEBI:61717"/>
    </ligand>
    <ligandPart>
        <name>Fe</name>
        <dbReference type="ChEBI" id="CHEBI:18248"/>
    </ligandPart>
</feature>
<feature type="binding site" description="axial binding residue" evidence="1 2">
    <location>
        <position position="62"/>
    </location>
    <ligand>
        <name>heme c</name>
        <dbReference type="ChEBI" id="CHEBI:61717"/>
    </ligand>
    <ligandPart>
        <name>Fe</name>
        <dbReference type="ChEBI" id="CHEBI:18248"/>
    </ligandPart>
</feature>
<feature type="helix" evidence="5">
    <location>
        <begin position="3"/>
        <end position="13"/>
    </location>
</feature>
<feature type="helix" evidence="5">
    <location>
        <begin position="15"/>
        <end position="18"/>
    </location>
</feature>
<feature type="helix" evidence="5">
    <location>
        <begin position="19"/>
        <end position="21"/>
    </location>
</feature>
<feature type="strand" evidence="5">
    <location>
        <begin position="24"/>
        <end position="26"/>
    </location>
</feature>
<feature type="helix" evidence="5">
    <location>
        <begin position="33"/>
        <end position="39"/>
    </location>
</feature>
<feature type="turn" evidence="5">
    <location>
        <begin position="41"/>
        <end position="45"/>
    </location>
</feature>
<feature type="helix" evidence="5">
    <location>
        <begin position="47"/>
        <end position="57"/>
    </location>
</feature>
<feature type="turn" evidence="5">
    <location>
        <begin position="66"/>
        <end position="68"/>
    </location>
</feature>
<feature type="helix" evidence="5">
    <location>
        <begin position="71"/>
        <end position="87"/>
    </location>
</feature>